<accession>Q83E85</accession>
<dbReference type="EMBL" id="AE016828">
    <property type="protein sequence ID" value="AAO89993.1"/>
    <property type="molecule type" value="Genomic_DNA"/>
</dbReference>
<dbReference type="RefSeq" id="NP_819479.1">
    <property type="nucleotide sequence ID" value="NC_002971.4"/>
</dbReference>
<dbReference type="RefSeq" id="WP_005771383.1">
    <property type="nucleotide sequence ID" value="NZ_CDBG01000001.1"/>
</dbReference>
<dbReference type="SMR" id="Q83E85"/>
<dbReference type="STRING" id="227377.CBU_0442"/>
<dbReference type="DNASU" id="1208326"/>
<dbReference type="EnsemblBacteria" id="AAO89993">
    <property type="protein sequence ID" value="AAO89993"/>
    <property type="gene ID" value="CBU_0442"/>
</dbReference>
<dbReference type="GeneID" id="1208326"/>
<dbReference type="KEGG" id="cbu:CBU_0442"/>
<dbReference type="PATRIC" id="fig|227377.7.peg.433"/>
<dbReference type="eggNOG" id="COG0335">
    <property type="taxonomic scope" value="Bacteria"/>
</dbReference>
<dbReference type="HOGENOM" id="CLU_103507_2_1_6"/>
<dbReference type="OrthoDB" id="9803541at2"/>
<dbReference type="Proteomes" id="UP000002671">
    <property type="component" value="Chromosome"/>
</dbReference>
<dbReference type="GO" id="GO:0022625">
    <property type="term" value="C:cytosolic large ribosomal subunit"/>
    <property type="evidence" value="ECO:0000318"/>
    <property type="project" value="GO_Central"/>
</dbReference>
<dbReference type="GO" id="GO:0003735">
    <property type="term" value="F:structural constituent of ribosome"/>
    <property type="evidence" value="ECO:0000318"/>
    <property type="project" value="GO_Central"/>
</dbReference>
<dbReference type="GO" id="GO:0006412">
    <property type="term" value="P:translation"/>
    <property type="evidence" value="ECO:0007669"/>
    <property type="project" value="UniProtKB-UniRule"/>
</dbReference>
<dbReference type="FunFam" id="2.30.30.790:FF:000001">
    <property type="entry name" value="50S ribosomal protein L19"/>
    <property type="match status" value="1"/>
</dbReference>
<dbReference type="Gene3D" id="2.30.30.790">
    <property type="match status" value="1"/>
</dbReference>
<dbReference type="HAMAP" id="MF_00402">
    <property type="entry name" value="Ribosomal_bL19"/>
    <property type="match status" value="1"/>
</dbReference>
<dbReference type="InterPro" id="IPR001857">
    <property type="entry name" value="Ribosomal_bL19"/>
</dbReference>
<dbReference type="InterPro" id="IPR018257">
    <property type="entry name" value="Ribosomal_bL19_CS"/>
</dbReference>
<dbReference type="InterPro" id="IPR038657">
    <property type="entry name" value="Ribosomal_bL19_sf"/>
</dbReference>
<dbReference type="InterPro" id="IPR008991">
    <property type="entry name" value="Translation_prot_SH3-like_sf"/>
</dbReference>
<dbReference type="NCBIfam" id="TIGR01024">
    <property type="entry name" value="rplS_bact"/>
    <property type="match status" value="1"/>
</dbReference>
<dbReference type="PANTHER" id="PTHR15680:SF9">
    <property type="entry name" value="LARGE RIBOSOMAL SUBUNIT PROTEIN BL19M"/>
    <property type="match status" value="1"/>
</dbReference>
<dbReference type="PANTHER" id="PTHR15680">
    <property type="entry name" value="RIBOSOMAL PROTEIN L19"/>
    <property type="match status" value="1"/>
</dbReference>
<dbReference type="Pfam" id="PF01245">
    <property type="entry name" value="Ribosomal_L19"/>
    <property type="match status" value="1"/>
</dbReference>
<dbReference type="PIRSF" id="PIRSF002191">
    <property type="entry name" value="Ribosomal_L19"/>
    <property type="match status" value="1"/>
</dbReference>
<dbReference type="PRINTS" id="PR00061">
    <property type="entry name" value="RIBOSOMALL19"/>
</dbReference>
<dbReference type="SUPFAM" id="SSF50104">
    <property type="entry name" value="Translation proteins SH3-like domain"/>
    <property type="match status" value="1"/>
</dbReference>
<dbReference type="PROSITE" id="PS01015">
    <property type="entry name" value="RIBOSOMAL_L19"/>
    <property type="match status" value="1"/>
</dbReference>
<protein>
    <recommendedName>
        <fullName evidence="1">Large ribosomal subunit protein bL19</fullName>
    </recommendedName>
    <alternativeName>
        <fullName evidence="2">50S ribosomal protein L19</fullName>
    </alternativeName>
</protein>
<proteinExistence type="inferred from homology"/>
<comment type="function">
    <text evidence="1">This protein is located at the 30S-50S ribosomal subunit interface and may play a role in the structure and function of the aminoacyl-tRNA binding site.</text>
</comment>
<comment type="similarity">
    <text evidence="1">Belongs to the bacterial ribosomal protein bL19 family.</text>
</comment>
<name>RL19_COXBU</name>
<evidence type="ECO:0000255" key="1">
    <source>
        <dbReference type="HAMAP-Rule" id="MF_00402"/>
    </source>
</evidence>
<evidence type="ECO:0000305" key="2"/>
<organism>
    <name type="scientific">Coxiella burnetii (strain RSA 493 / Nine Mile phase I)</name>
    <dbReference type="NCBI Taxonomy" id="227377"/>
    <lineage>
        <taxon>Bacteria</taxon>
        <taxon>Pseudomonadati</taxon>
        <taxon>Pseudomonadota</taxon>
        <taxon>Gammaproteobacteria</taxon>
        <taxon>Legionellales</taxon>
        <taxon>Coxiellaceae</taxon>
        <taxon>Coxiella</taxon>
    </lineage>
</organism>
<gene>
    <name evidence="1" type="primary">rplS</name>
    <name type="ordered locus">CBU_0442</name>
</gene>
<reference key="1">
    <citation type="journal article" date="2003" name="Proc. Natl. Acad. Sci. U.S.A.">
        <title>Complete genome sequence of the Q-fever pathogen, Coxiella burnetii.</title>
        <authorList>
            <person name="Seshadri R."/>
            <person name="Paulsen I.T."/>
            <person name="Eisen J.A."/>
            <person name="Read T.D."/>
            <person name="Nelson K.E."/>
            <person name="Nelson W.C."/>
            <person name="Ward N.L."/>
            <person name="Tettelin H."/>
            <person name="Davidsen T.M."/>
            <person name="Beanan M.J."/>
            <person name="DeBoy R.T."/>
            <person name="Daugherty S.C."/>
            <person name="Brinkac L.M."/>
            <person name="Madupu R."/>
            <person name="Dodson R.J."/>
            <person name="Khouri H.M."/>
            <person name="Lee K.H."/>
            <person name="Carty H.A."/>
            <person name="Scanlan D."/>
            <person name="Heinzen R.A."/>
            <person name="Thompson H.A."/>
            <person name="Samuel J.E."/>
            <person name="Fraser C.M."/>
            <person name="Heidelberg J.F."/>
        </authorList>
    </citation>
    <scope>NUCLEOTIDE SEQUENCE [LARGE SCALE GENOMIC DNA]</scope>
    <source>
        <strain>RSA 493 / Nine Mile phase I</strain>
    </source>
</reference>
<sequence>MNNIIQLLETEQTQGKEIPDFRAGDTVTVQVKVKEGNRERLQAFEGVVIARRHRGLNSSFTVRKVSHGEGVERVFQLYSPLIASIKVNRRGDVRRAKLYYLRNLRGRKAKIKEKI</sequence>
<feature type="chain" id="PRO_0000163447" description="Large ribosomal subunit protein bL19">
    <location>
        <begin position="1"/>
        <end position="115"/>
    </location>
</feature>
<keyword id="KW-1185">Reference proteome</keyword>
<keyword id="KW-0687">Ribonucleoprotein</keyword>
<keyword id="KW-0689">Ribosomal protein</keyword>